<organism>
    <name type="scientific">Leptospira interrogans serogroup Icterohaemorrhagiae serovar copenhageni (strain Fiocruz L1-130)</name>
    <dbReference type="NCBI Taxonomy" id="267671"/>
    <lineage>
        <taxon>Bacteria</taxon>
        <taxon>Pseudomonadati</taxon>
        <taxon>Spirochaetota</taxon>
        <taxon>Spirochaetia</taxon>
        <taxon>Leptospirales</taxon>
        <taxon>Leptospiraceae</taxon>
        <taxon>Leptospira</taxon>
    </lineage>
</organism>
<name>RL10_LEPIC</name>
<gene>
    <name evidence="1" type="primary">rplJ</name>
    <name type="ordered locus">LIC_10751</name>
</gene>
<comment type="function">
    <text evidence="1">Forms part of the ribosomal stalk, playing a central role in the interaction of the ribosome with GTP-bound translation factors.</text>
</comment>
<comment type="subunit">
    <text evidence="1">Part of the ribosomal stalk of the 50S ribosomal subunit. The N-terminus interacts with L11 and the large rRNA to form the base of the stalk. The C-terminus forms an elongated spine to which L12 dimers bind in a sequential fashion forming a multimeric L10(L12)X complex.</text>
</comment>
<comment type="similarity">
    <text evidence="1">Belongs to the universal ribosomal protein uL10 family.</text>
</comment>
<feature type="chain" id="PRO_0000154652" description="Large ribosomal subunit protein uL10">
    <location>
        <begin position="1"/>
        <end position="177"/>
    </location>
</feature>
<accession>Q72UB0</accession>
<protein>
    <recommendedName>
        <fullName evidence="1">Large ribosomal subunit protein uL10</fullName>
    </recommendedName>
    <alternativeName>
        <fullName evidence="2">50S ribosomal protein L10</fullName>
    </alternativeName>
</protein>
<dbReference type="EMBL" id="AE016823">
    <property type="protein sequence ID" value="AAS69368.1"/>
    <property type="molecule type" value="Genomic_DNA"/>
</dbReference>
<dbReference type="RefSeq" id="WP_000013204.1">
    <property type="nucleotide sequence ID" value="NC_005823.1"/>
</dbReference>
<dbReference type="SMR" id="Q72UB0"/>
<dbReference type="GeneID" id="61144091"/>
<dbReference type="KEGG" id="lic:LIC_10751"/>
<dbReference type="HOGENOM" id="CLU_092227_1_1_12"/>
<dbReference type="Proteomes" id="UP000007037">
    <property type="component" value="Chromosome I"/>
</dbReference>
<dbReference type="GO" id="GO:1990904">
    <property type="term" value="C:ribonucleoprotein complex"/>
    <property type="evidence" value="ECO:0007669"/>
    <property type="project" value="UniProtKB-KW"/>
</dbReference>
<dbReference type="GO" id="GO:0005840">
    <property type="term" value="C:ribosome"/>
    <property type="evidence" value="ECO:0007669"/>
    <property type="project" value="UniProtKB-KW"/>
</dbReference>
<dbReference type="GO" id="GO:0070180">
    <property type="term" value="F:large ribosomal subunit rRNA binding"/>
    <property type="evidence" value="ECO:0007669"/>
    <property type="project" value="UniProtKB-UniRule"/>
</dbReference>
<dbReference type="GO" id="GO:0006412">
    <property type="term" value="P:translation"/>
    <property type="evidence" value="ECO:0007669"/>
    <property type="project" value="UniProtKB-UniRule"/>
</dbReference>
<dbReference type="CDD" id="cd05797">
    <property type="entry name" value="Ribosomal_L10"/>
    <property type="match status" value="1"/>
</dbReference>
<dbReference type="FunFam" id="3.30.70.1730:FF:000010">
    <property type="entry name" value="50S ribosomal protein L10"/>
    <property type="match status" value="1"/>
</dbReference>
<dbReference type="Gene3D" id="3.30.70.1730">
    <property type="match status" value="1"/>
</dbReference>
<dbReference type="Gene3D" id="6.10.250.290">
    <property type="match status" value="1"/>
</dbReference>
<dbReference type="HAMAP" id="MF_00362">
    <property type="entry name" value="Ribosomal_uL10"/>
    <property type="match status" value="1"/>
</dbReference>
<dbReference type="InterPro" id="IPR001790">
    <property type="entry name" value="Ribosomal_uL10"/>
</dbReference>
<dbReference type="InterPro" id="IPR043141">
    <property type="entry name" value="Ribosomal_uL10-like_sf"/>
</dbReference>
<dbReference type="InterPro" id="IPR022973">
    <property type="entry name" value="Ribosomal_uL10_bac"/>
</dbReference>
<dbReference type="InterPro" id="IPR047865">
    <property type="entry name" value="Ribosomal_uL10_bac_type"/>
</dbReference>
<dbReference type="NCBIfam" id="NF000955">
    <property type="entry name" value="PRK00099.1-1"/>
    <property type="match status" value="1"/>
</dbReference>
<dbReference type="PANTHER" id="PTHR11560">
    <property type="entry name" value="39S RIBOSOMAL PROTEIN L10, MITOCHONDRIAL"/>
    <property type="match status" value="1"/>
</dbReference>
<dbReference type="Pfam" id="PF00466">
    <property type="entry name" value="Ribosomal_L10"/>
    <property type="match status" value="1"/>
</dbReference>
<dbReference type="SUPFAM" id="SSF160369">
    <property type="entry name" value="Ribosomal protein L10-like"/>
    <property type="match status" value="1"/>
</dbReference>
<proteinExistence type="inferred from homology"/>
<keyword id="KW-0687">Ribonucleoprotein</keyword>
<keyword id="KW-0689">Ribosomal protein</keyword>
<keyword id="KW-0694">RNA-binding</keyword>
<keyword id="KW-0699">rRNA-binding</keyword>
<sequence>MANQEKIEAVALLKGKLETRNNFILACYSGLTVEEITGLRAQLRKEGSEMKVLKNNLFLRALKESGAHKDKNITFGSEYQGPLAAIFAKDNLPAIAKVCKDFAKNNKNLIVKAGYMDGSVLDANGVDAIAGLPSREQLLAQIAGGINGPARTIASGINQIIASLARAIQATAEKNNA</sequence>
<evidence type="ECO:0000255" key="1">
    <source>
        <dbReference type="HAMAP-Rule" id="MF_00362"/>
    </source>
</evidence>
<evidence type="ECO:0000305" key="2"/>
<reference key="1">
    <citation type="journal article" date="2004" name="J. Bacteriol.">
        <title>Comparative genomics of two Leptospira interrogans serovars reveals novel insights into physiology and pathogenesis.</title>
        <authorList>
            <person name="Nascimento A.L.T.O."/>
            <person name="Ko A.I."/>
            <person name="Martins E.A.L."/>
            <person name="Monteiro-Vitorello C.B."/>
            <person name="Ho P.L."/>
            <person name="Haake D.A."/>
            <person name="Verjovski-Almeida S."/>
            <person name="Hartskeerl R.A."/>
            <person name="Marques M.V."/>
            <person name="Oliveira M.C."/>
            <person name="Menck C.F.M."/>
            <person name="Leite L.C.C."/>
            <person name="Carrer H."/>
            <person name="Coutinho L.L."/>
            <person name="Degrave W.M."/>
            <person name="Dellagostin O.A."/>
            <person name="El-Dorry H."/>
            <person name="Ferro E.S."/>
            <person name="Ferro M.I.T."/>
            <person name="Furlan L.R."/>
            <person name="Gamberini M."/>
            <person name="Giglioti E.A."/>
            <person name="Goes-Neto A."/>
            <person name="Goldman G.H."/>
            <person name="Goldman M.H.S."/>
            <person name="Harakava R."/>
            <person name="Jeronimo S.M.B."/>
            <person name="Junqueira-de-Azevedo I.L.M."/>
            <person name="Kimura E.T."/>
            <person name="Kuramae E.E."/>
            <person name="Lemos E.G.M."/>
            <person name="Lemos M.V.F."/>
            <person name="Marino C.L."/>
            <person name="Nunes L.R."/>
            <person name="de Oliveira R.C."/>
            <person name="Pereira G.G."/>
            <person name="Reis M.S."/>
            <person name="Schriefer A."/>
            <person name="Siqueira W.J."/>
            <person name="Sommer P."/>
            <person name="Tsai S.M."/>
            <person name="Simpson A.J.G."/>
            <person name="Ferro J.A."/>
            <person name="Camargo L.E.A."/>
            <person name="Kitajima J.P."/>
            <person name="Setubal J.C."/>
            <person name="Van Sluys M.A."/>
        </authorList>
    </citation>
    <scope>NUCLEOTIDE SEQUENCE [LARGE SCALE GENOMIC DNA]</scope>
    <source>
        <strain>Fiocruz L1-130</strain>
    </source>
</reference>